<accession>Q7N3R1</accession>
<feature type="chain" id="PRO_0000218155" description="Probable 4-amino-4-deoxy-L-arabinose-phosphoundecaprenol flippase subunit ArnF">
    <location>
        <begin position="1"/>
        <end position="126"/>
    </location>
</feature>
<feature type="topological domain" description="Cytoplasmic" evidence="1">
    <location>
        <begin position="1"/>
        <end position="4"/>
    </location>
</feature>
<feature type="transmembrane region" description="Helical" evidence="1">
    <location>
        <begin position="5"/>
        <end position="25"/>
    </location>
</feature>
<feature type="topological domain" description="Periplasmic" evidence="1">
    <location>
        <begin position="26"/>
        <end position="49"/>
    </location>
</feature>
<feature type="transmembrane region" description="Helical" evidence="1">
    <location>
        <begin position="50"/>
        <end position="70"/>
    </location>
</feature>
<feature type="topological domain" description="Cytoplasmic" evidence="1">
    <location>
        <begin position="71"/>
        <end position="79"/>
    </location>
</feature>
<feature type="transmembrane region" description="Helical" evidence="1">
    <location>
        <begin position="80"/>
        <end position="100"/>
    </location>
</feature>
<feature type="topological domain" description="Periplasmic" evidence="1">
    <location>
        <begin position="101"/>
        <end position="102"/>
    </location>
</feature>
<feature type="transmembrane region" description="Helical" evidence="1">
    <location>
        <begin position="103"/>
        <end position="123"/>
    </location>
</feature>
<feature type="topological domain" description="Cytoplasmic" evidence="1">
    <location>
        <begin position="124"/>
        <end position="126"/>
    </location>
</feature>
<reference key="1">
    <citation type="journal article" date="2003" name="Nat. Biotechnol.">
        <title>The genome sequence of the entomopathogenic bacterium Photorhabdus luminescens.</title>
        <authorList>
            <person name="Duchaud E."/>
            <person name="Rusniok C."/>
            <person name="Frangeul L."/>
            <person name="Buchrieser C."/>
            <person name="Givaudan A."/>
            <person name="Taourit S."/>
            <person name="Bocs S."/>
            <person name="Boursaux-Eude C."/>
            <person name="Chandler M."/>
            <person name="Charles J.-F."/>
            <person name="Dassa E."/>
            <person name="Derose R."/>
            <person name="Derzelle S."/>
            <person name="Freyssinet G."/>
            <person name="Gaudriault S."/>
            <person name="Medigue C."/>
            <person name="Lanois A."/>
            <person name="Powell K."/>
            <person name="Siguier P."/>
            <person name="Vincent R."/>
            <person name="Wingate V."/>
            <person name="Zouine M."/>
            <person name="Glaser P."/>
            <person name="Boemare N."/>
            <person name="Danchin A."/>
            <person name="Kunst F."/>
        </authorList>
    </citation>
    <scope>NUCLEOTIDE SEQUENCE [LARGE SCALE GENOMIC DNA]</scope>
    <source>
        <strain>DSM 15139 / CIP 105565 / TT01</strain>
    </source>
</reference>
<sequence length="126" mass="14482">MKGYIWGLISVLLVTIAQLLLKWGVVNLPALNLGLHWFDIEWLWSHRHSLVAVMAGLAGYLLSMLCWLFTLKYLPLNKAYPLISLSYVFVYLMVALLPWFNETITLLKTAGVIFILYGVWLISRPE</sequence>
<name>ARNF_PHOLL</name>
<organism>
    <name type="scientific">Photorhabdus laumondii subsp. laumondii (strain DSM 15139 / CIP 105565 / TT01)</name>
    <name type="common">Photorhabdus luminescens subsp. laumondii</name>
    <dbReference type="NCBI Taxonomy" id="243265"/>
    <lineage>
        <taxon>Bacteria</taxon>
        <taxon>Pseudomonadati</taxon>
        <taxon>Pseudomonadota</taxon>
        <taxon>Gammaproteobacteria</taxon>
        <taxon>Enterobacterales</taxon>
        <taxon>Morganellaceae</taxon>
        <taxon>Photorhabdus</taxon>
    </lineage>
</organism>
<keyword id="KW-0997">Cell inner membrane</keyword>
<keyword id="KW-1003">Cell membrane</keyword>
<keyword id="KW-0441">Lipid A biosynthesis</keyword>
<keyword id="KW-0444">Lipid biosynthesis</keyword>
<keyword id="KW-0443">Lipid metabolism</keyword>
<keyword id="KW-0448">Lipopolysaccharide biosynthesis</keyword>
<keyword id="KW-0472">Membrane</keyword>
<keyword id="KW-1185">Reference proteome</keyword>
<keyword id="KW-0812">Transmembrane</keyword>
<keyword id="KW-1133">Transmembrane helix</keyword>
<keyword id="KW-0813">Transport</keyword>
<dbReference type="EMBL" id="BX571867">
    <property type="protein sequence ID" value="CAE15028.1"/>
    <property type="molecule type" value="Genomic_DNA"/>
</dbReference>
<dbReference type="RefSeq" id="WP_011146876.1">
    <property type="nucleotide sequence ID" value="NC_005126.1"/>
</dbReference>
<dbReference type="SMR" id="Q7N3R1"/>
<dbReference type="STRING" id="243265.plu2654"/>
<dbReference type="GeneID" id="48848917"/>
<dbReference type="KEGG" id="plu:plu2654"/>
<dbReference type="eggNOG" id="COG2076">
    <property type="taxonomic scope" value="Bacteria"/>
</dbReference>
<dbReference type="HOGENOM" id="CLU_131462_1_0_6"/>
<dbReference type="OrthoDB" id="5592809at2"/>
<dbReference type="UniPathway" id="UPA00030"/>
<dbReference type="Proteomes" id="UP000002514">
    <property type="component" value="Chromosome"/>
</dbReference>
<dbReference type="GO" id="GO:0005886">
    <property type="term" value="C:plasma membrane"/>
    <property type="evidence" value="ECO:0007669"/>
    <property type="project" value="UniProtKB-SubCell"/>
</dbReference>
<dbReference type="GO" id="GO:1901505">
    <property type="term" value="F:carbohydrate derivative transmembrane transporter activity"/>
    <property type="evidence" value="ECO:0007669"/>
    <property type="project" value="InterPro"/>
</dbReference>
<dbReference type="GO" id="GO:0009245">
    <property type="term" value="P:lipid A biosynthetic process"/>
    <property type="evidence" value="ECO:0007669"/>
    <property type="project" value="UniProtKB-UniRule"/>
</dbReference>
<dbReference type="GO" id="GO:0009103">
    <property type="term" value="P:lipopolysaccharide biosynthetic process"/>
    <property type="evidence" value="ECO:0007669"/>
    <property type="project" value="UniProtKB-UniRule"/>
</dbReference>
<dbReference type="Gene3D" id="1.10.3730.20">
    <property type="match status" value="1"/>
</dbReference>
<dbReference type="HAMAP" id="MF_00538">
    <property type="entry name" value="Flippase_ArnF"/>
    <property type="match status" value="1"/>
</dbReference>
<dbReference type="InterPro" id="IPR022832">
    <property type="entry name" value="Flippase_ArnF"/>
</dbReference>
<dbReference type="InterPro" id="IPR000390">
    <property type="entry name" value="Small_drug/metabolite_transptr"/>
</dbReference>
<dbReference type="NCBIfam" id="NF002816">
    <property type="entry name" value="PRK02971.1-2"/>
    <property type="match status" value="1"/>
</dbReference>
<dbReference type="PANTHER" id="PTHR30561:SF9">
    <property type="entry name" value="4-AMINO-4-DEOXY-L-ARABINOSE-PHOSPHOUNDECAPRENOL FLIPPASE SUBUNIT ARNF-RELATED"/>
    <property type="match status" value="1"/>
</dbReference>
<dbReference type="PANTHER" id="PTHR30561">
    <property type="entry name" value="SMR FAMILY PROTON-DEPENDENT DRUG EFFLUX TRANSPORTER SUGE"/>
    <property type="match status" value="1"/>
</dbReference>
<dbReference type="SUPFAM" id="SSF103481">
    <property type="entry name" value="Multidrug resistance efflux transporter EmrE"/>
    <property type="match status" value="1"/>
</dbReference>
<evidence type="ECO:0000255" key="1">
    <source>
        <dbReference type="HAMAP-Rule" id="MF_00538"/>
    </source>
</evidence>
<protein>
    <recommendedName>
        <fullName evidence="1">Probable 4-amino-4-deoxy-L-arabinose-phosphoundecaprenol flippase subunit ArnF</fullName>
        <shortName evidence="1">L-Ara4N-phosphoundecaprenol flippase subunit ArnF</shortName>
    </recommendedName>
    <alternativeName>
        <fullName evidence="1">Undecaprenyl phosphate-aminoarabinose flippase subunit ArnF</fullName>
    </alternativeName>
</protein>
<comment type="function">
    <text evidence="1">Translocates 4-amino-4-deoxy-L-arabinose-phosphoundecaprenol (alpha-L-Ara4N-phosphoundecaprenol) from the cytoplasmic to the periplasmic side of the inner membrane.</text>
</comment>
<comment type="pathway">
    <text evidence="1">Bacterial outer membrane biogenesis; lipopolysaccharide biosynthesis.</text>
</comment>
<comment type="subunit">
    <text evidence="1">Heterodimer of ArnE and ArnF.</text>
</comment>
<comment type="subcellular location">
    <subcellularLocation>
        <location evidence="1">Cell inner membrane</location>
        <topology evidence="1">Multi-pass membrane protein</topology>
    </subcellularLocation>
</comment>
<comment type="similarity">
    <text evidence="1">Belongs to the ArnF family.</text>
</comment>
<proteinExistence type="inferred from homology"/>
<gene>
    <name evidence="1" type="primary">arnF</name>
    <name type="synonym">pbgE3</name>
    <name type="ordered locus">plu2654</name>
</gene>